<comment type="function">
    <text evidence="1">RNaseP catalyzes the removal of the 5'-leader sequence from pre-tRNA to produce the mature 5'-terminus. It can also cleave other RNA substrates such as 4.5S RNA. The protein component plays an auxiliary but essential role in vivo by binding to the 5'-leader sequence and broadening the substrate specificity of the ribozyme.</text>
</comment>
<comment type="catalytic activity">
    <reaction evidence="1">
        <text>Endonucleolytic cleavage of RNA, removing 5'-extranucleotides from tRNA precursor.</text>
        <dbReference type="EC" id="3.1.26.5"/>
    </reaction>
</comment>
<comment type="subunit">
    <text evidence="1">Consists of a catalytic RNA component (M1 or rnpB) and a protein subunit.</text>
</comment>
<comment type="similarity">
    <text evidence="1">Belongs to the RnpA family.</text>
</comment>
<evidence type="ECO:0000255" key="1">
    <source>
        <dbReference type="HAMAP-Rule" id="MF_00227"/>
    </source>
</evidence>
<feature type="chain" id="PRO_1000021433" description="Ribonuclease P protein component">
    <location>
        <begin position="1"/>
        <end position="118"/>
    </location>
</feature>
<gene>
    <name evidence="1" type="primary">rnpA</name>
    <name type="ordered locus">Mmcs_5412</name>
</gene>
<name>RNPA_MYCSS</name>
<protein>
    <recommendedName>
        <fullName evidence="1">Ribonuclease P protein component</fullName>
        <shortName evidence="1">RNase P protein</shortName>
        <shortName evidence="1">RNaseP protein</shortName>
        <ecNumber evidence="1">3.1.26.5</ecNumber>
    </recommendedName>
    <alternativeName>
        <fullName evidence="1">Protein C5</fullName>
    </alternativeName>
</protein>
<sequence>MLPARYRMTRSTEFSTTVSKGVRSAQPDLVLHMANVLDDPSGPRVGLVVAKSVGNAVVRHRVSRRLRHSVHPMLDELQPGHRLVIRALPGAASATSARLHQELSAALRRARPRVEASA</sequence>
<dbReference type="EC" id="3.1.26.5" evidence="1"/>
<dbReference type="EMBL" id="CP000384">
    <property type="protein sequence ID" value="ABG11512.1"/>
    <property type="molecule type" value="Genomic_DNA"/>
</dbReference>
<dbReference type="SMR" id="Q1B0S2"/>
<dbReference type="KEGG" id="mmc:Mmcs_5412"/>
<dbReference type="HOGENOM" id="CLU_117179_4_1_11"/>
<dbReference type="BioCyc" id="MSP164756:G1G6O-5524-MONOMER"/>
<dbReference type="GO" id="GO:0030677">
    <property type="term" value="C:ribonuclease P complex"/>
    <property type="evidence" value="ECO:0007669"/>
    <property type="project" value="TreeGrafter"/>
</dbReference>
<dbReference type="GO" id="GO:0042781">
    <property type="term" value="F:3'-tRNA processing endoribonuclease activity"/>
    <property type="evidence" value="ECO:0007669"/>
    <property type="project" value="TreeGrafter"/>
</dbReference>
<dbReference type="GO" id="GO:0004526">
    <property type="term" value="F:ribonuclease P activity"/>
    <property type="evidence" value="ECO:0007669"/>
    <property type="project" value="UniProtKB-UniRule"/>
</dbReference>
<dbReference type="GO" id="GO:0000049">
    <property type="term" value="F:tRNA binding"/>
    <property type="evidence" value="ECO:0007669"/>
    <property type="project" value="UniProtKB-UniRule"/>
</dbReference>
<dbReference type="GO" id="GO:0001682">
    <property type="term" value="P:tRNA 5'-leader removal"/>
    <property type="evidence" value="ECO:0007669"/>
    <property type="project" value="UniProtKB-UniRule"/>
</dbReference>
<dbReference type="Gene3D" id="3.30.230.10">
    <property type="match status" value="1"/>
</dbReference>
<dbReference type="HAMAP" id="MF_00227">
    <property type="entry name" value="RNase_P"/>
    <property type="match status" value="1"/>
</dbReference>
<dbReference type="InterPro" id="IPR020568">
    <property type="entry name" value="Ribosomal_Su5_D2-typ_SF"/>
</dbReference>
<dbReference type="InterPro" id="IPR014721">
    <property type="entry name" value="Ribsml_uS5_D2-typ_fold_subgr"/>
</dbReference>
<dbReference type="InterPro" id="IPR000100">
    <property type="entry name" value="RNase_P"/>
</dbReference>
<dbReference type="NCBIfam" id="TIGR00188">
    <property type="entry name" value="rnpA"/>
    <property type="match status" value="1"/>
</dbReference>
<dbReference type="PANTHER" id="PTHR33992">
    <property type="entry name" value="RIBONUCLEASE P PROTEIN COMPONENT"/>
    <property type="match status" value="1"/>
</dbReference>
<dbReference type="PANTHER" id="PTHR33992:SF1">
    <property type="entry name" value="RIBONUCLEASE P PROTEIN COMPONENT"/>
    <property type="match status" value="1"/>
</dbReference>
<dbReference type="Pfam" id="PF00825">
    <property type="entry name" value="Ribonuclease_P"/>
    <property type="match status" value="1"/>
</dbReference>
<dbReference type="SUPFAM" id="SSF54211">
    <property type="entry name" value="Ribosomal protein S5 domain 2-like"/>
    <property type="match status" value="1"/>
</dbReference>
<keyword id="KW-0255">Endonuclease</keyword>
<keyword id="KW-0378">Hydrolase</keyword>
<keyword id="KW-0540">Nuclease</keyword>
<keyword id="KW-0694">RNA-binding</keyword>
<keyword id="KW-0819">tRNA processing</keyword>
<accession>Q1B0S2</accession>
<proteinExistence type="inferred from homology"/>
<organism>
    <name type="scientific">Mycobacterium sp. (strain MCS)</name>
    <dbReference type="NCBI Taxonomy" id="164756"/>
    <lineage>
        <taxon>Bacteria</taxon>
        <taxon>Bacillati</taxon>
        <taxon>Actinomycetota</taxon>
        <taxon>Actinomycetes</taxon>
        <taxon>Mycobacteriales</taxon>
        <taxon>Mycobacteriaceae</taxon>
        <taxon>Mycobacterium</taxon>
    </lineage>
</organism>
<reference key="1">
    <citation type="submission" date="2006-06" db="EMBL/GenBank/DDBJ databases">
        <title>Complete sequence of chromosome of Mycobacterium sp. MCS.</title>
        <authorList>
            <consortium name="US DOE Joint Genome Institute"/>
            <person name="Copeland A."/>
            <person name="Lucas S."/>
            <person name="Lapidus A."/>
            <person name="Barry K."/>
            <person name="Detter J.C."/>
            <person name="Glavina del Rio T."/>
            <person name="Hammon N."/>
            <person name="Israni S."/>
            <person name="Dalin E."/>
            <person name="Tice H."/>
            <person name="Pitluck S."/>
            <person name="Martinez M."/>
            <person name="Schmutz J."/>
            <person name="Larimer F."/>
            <person name="Land M."/>
            <person name="Hauser L."/>
            <person name="Kyrpides N."/>
            <person name="Kim E."/>
            <person name="Miller C.D."/>
            <person name="Hughes J.E."/>
            <person name="Anderson A.J."/>
            <person name="Sims R.C."/>
            <person name="Richardson P."/>
        </authorList>
    </citation>
    <scope>NUCLEOTIDE SEQUENCE [LARGE SCALE GENOMIC DNA]</scope>
    <source>
        <strain>MCS</strain>
    </source>
</reference>